<protein>
    <recommendedName>
        <fullName>Uncharacterized methyltransferase MT0234</fullName>
        <ecNumber>2.1.1.-</ecNumber>
    </recommendedName>
</protein>
<organism>
    <name type="scientific">Mycobacterium tuberculosis (strain CDC 1551 / Oshkosh)</name>
    <dbReference type="NCBI Taxonomy" id="83331"/>
    <lineage>
        <taxon>Bacteria</taxon>
        <taxon>Bacillati</taxon>
        <taxon>Actinomycetota</taxon>
        <taxon>Actinomycetes</taxon>
        <taxon>Mycobacteriales</taxon>
        <taxon>Mycobacteriaceae</taxon>
        <taxon>Mycobacterium</taxon>
        <taxon>Mycobacterium tuberculosis complex</taxon>
    </lineage>
</organism>
<dbReference type="EC" id="2.1.1.-"/>
<dbReference type="EMBL" id="AE000516">
    <property type="protein sequence ID" value="AAK44455.1"/>
    <property type="molecule type" value="Genomic_DNA"/>
</dbReference>
<dbReference type="PIR" id="F70961">
    <property type="entry name" value="F70961"/>
</dbReference>
<dbReference type="RefSeq" id="WP_003401240.1">
    <property type="nucleotide sequence ID" value="NZ_KK341227.1"/>
</dbReference>
<dbReference type="KEGG" id="mtc:MT0234"/>
<dbReference type="PATRIC" id="fig|83331.31.peg.254"/>
<dbReference type="HOGENOM" id="CLU_073035_0_0_11"/>
<dbReference type="Proteomes" id="UP000001020">
    <property type="component" value="Chromosome"/>
</dbReference>
<dbReference type="GO" id="GO:0008757">
    <property type="term" value="F:S-adenosylmethionine-dependent methyltransferase activity"/>
    <property type="evidence" value="ECO:0007669"/>
    <property type="project" value="InterPro"/>
</dbReference>
<dbReference type="GO" id="GO:0032259">
    <property type="term" value="P:methylation"/>
    <property type="evidence" value="ECO:0007669"/>
    <property type="project" value="UniProtKB-KW"/>
</dbReference>
<dbReference type="CDD" id="cd02440">
    <property type="entry name" value="AdoMet_MTases"/>
    <property type="match status" value="1"/>
</dbReference>
<dbReference type="Gene3D" id="3.40.50.150">
    <property type="entry name" value="Vaccinia Virus protein VP39"/>
    <property type="match status" value="1"/>
</dbReference>
<dbReference type="InterPro" id="IPR013216">
    <property type="entry name" value="Methyltransf_11"/>
</dbReference>
<dbReference type="InterPro" id="IPR029063">
    <property type="entry name" value="SAM-dependent_MTases_sf"/>
</dbReference>
<dbReference type="PANTHER" id="PTHR43591:SF24">
    <property type="entry name" value="2-METHOXY-6-POLYPRENYL-1,4-BENZOQUINOL METHYLASE, MITOCHONDRIAL"/>
    <property type="match status" value="1"/>
</dbReference>
<dbReference type="PANTHER" id="PTHR43591">
    <property type="entry name" value="METHYLTRANSFERASE"/>
    <property type="match status" value="1"/>
</dbReference>
<dbReference type="Pfam" id="PF08241">
    <property type="entry name" value="Methyltransf_11"/>
    <property type="match status" value="1"/>
</dbReference>
<dbReference type="SUPFAM" id="SSF53335">
    <property type="entry name" value="S-adenosyl-L-methionine-dependent methyltransferases"/>
    <property type="match status" value="1"/>
</dbReference>
<gene>
    <name type="ordered locus">MT0234</name>
</gene>
<feature type="chain" id="PRO_0000427742" description="Uncharacterized methyltransferase MT0234">
    <location>
        <begin position="1"/>
        <end position="254"/>
    </location>
</feature>
<name>Y224_MYCTO</name>
<keyword id="KW-0489">Methyltransferase</keyword>
<keyword id="KW-1185">Reference proteome</keyword>
<keyword id="KW-0808">Transferase</keyword>
<sequence>MAVTDVFARRATLRRSLRLLADFRYEQRDPARFYRTLAADTAAMIGDLWLATHSEPPVGRTLLDVGGGPGYFATAFSDAGVGYIGVEPDPDEMHAAGPAFTGRPGMFVRASGMALPFADDSVDICLSSNVAEHVPRPWQLGTEMLRVTKPGGLVVLSYTVWLGPFGGHEMGLSHYLGGARAAARYVRKHGHPAKNNYGSSLFAVSAAEGLRWAAGTGAALAVFPRYHPRWAWWLTSVPVLREFLVSNLVLVLTP</sequence>
<evidence type="ECO:0000305" key="1"/>
<proteinExistence type="inferred from homology"/>
<accession>P9WJZ8</accession>
<accession>L0T5V2</accession>
<accession>P96406</accession>
<accession>Q7DA86</accession>
<reference key="1">
    <citation type="journal article" date="2002" name="J. Bacteriol.">
        <title>Whole-genome comparison of Mycobacterium tuberculosis clinical and laboratory strains.</title>
        <authorList>
            <person name="Fleischmann R.D."/>
            <person name="Alland D."/>
            <person name="Eisen J.A."/>
            <person name="Carpenter L."/>
            <person name="White O."/>
            <person name="Peterson J.D."/>
            <person name="DeBoy R.T."/>
            <person name="Dodson R.J."/>
            <person name="Gwinn M.L."/>
            <person name="Haft D.H."/>
            <person name="Hickey E.K."/>
            <person name="Kolonay J.F."/>
            <person name="Nelson W.C."/>
            <person name="Umayam L.A."/>
            <person name="Ermolaeva M.D."/>
            <person name="Salzberg S.L."/>
            <person name="Delcher A."/>
            <person name="Utterback T.R."/>
            <person name="Weidman J.F."/>
            <person name="Khouri H.M."/>
            <person name="Gill J."/>
            <person name="Mikula A."/>
            <person name="Bishai W."/>
            <person name="Jacobs W.R. Jr."/>
            <person name="Venter J.C."/>
            <person name="Fraser C.M."/>
        </authorList>
    </citation>
    <scope>NUCLEOTIDE SEQUENCE [LARGE SCALE GENOMIC DNA]</scope>
    <source>
        <strain>CDC 1551 / Oshkosh</strain>
    </source>
</reference>
<comment type="similarity">
    <text evidence="1">Belongs to the methyltransferase superfamily.</text>
</comment>